<keyword id="KW-0050">Antiport</keyword>
<keyword id="KW-1003">Cell membrane</keyword>
<keyword id="KW-0375">Hydrogen ion transport</keyword>
<keyword id="KW-0406">Ion transport</keyword>
<keyword id="KW-0472">Membrane</keyword>
<keyword id="KW-0915">Sodium</keyword>
<keyword id="KW-0739">Sodium transport</keyword>
<keyword id="KW-0812">Transmembrane</keyword>
<keyword id="KW-1133">Transmembrane helix</keyword>
<keyword id="KW-0813">Transport</keyword>
<gene>
    <name type="primary">mnhB1</name>
    <name type="ordered locus">SA0812</name>
</gene>
<feature type="chain" id="PRO_0000088858" description="Na(+)/H(+) antiporter subunit B1">
    <location>
        <begin position="1"/>
        <end position="142"/>
    </location>
</feature>
<feature type="transmembrane region" description="Helical" evidence="2">
    <location>
        <begin position="9"/>
        <end position="31"/>
    </location>
</feature>
<feature type="transmembrane region" description="Helical" evidence="2">
    <location>
        <begin position="35"/>
        <end position="57"/>
    </location>
</feature>
<feature type="transmembrane region" description="Helical" evidence="2">
    <location>
        <begin position="70"/>
        <end position="92"/>
    </location>
</feature>
<feature type="transmembrane region" description="Helical" evidence="2">
    <location>
        <begin position="116"/>
        <end position="138"/>
    </location>
</feature>
<evidence type="ECO:0000250" key="1"/>
<evidence type="ECO:0000255" key="2"/>
<evidence type="ECO:0000305" key="3"/>
<reference key="1">
    <citation type="journal article" date="2001" name="Lancet">
        <title>Whole genome sequencing of meticillin-resistant Staphylococcus aureus.</title>
        <authorList>
            <person name="Kuroda M."/>
            <person name="Ohta T."/>
            <person name="Uchiyama I."/>
            <person name="Baba T."/>
            <person name="Yuzawa H."/>
            <person name="Kobayashi I."/>
            <person name="Cui L."/>
            <person name="Oguchi A."/>
            <person name="Aoki K."/>
            <person name="Nagai Y."/>
            <person name="Lian J.-Q."/>
            <person name="Ito T."/>
            <person name="Kanamori M."/>
            <person name="Matsumaru H."/>
            <person name="Maruyama A."/>
            <person name="Murakami H."/>
            <person name="Hosoyama A."/>
            <person name="Mizutani-Ui Y."/>
            <person name="Takahashi N.K."/>
            <person name="Sawano T."/>
            <person name="Inoue R."/>
            <person name="Kaito C."/>
            <person name="Sekimizu K."/>
            <person name="Hirakawa H."/>
            <person name="Kuhara S."/>
            <person name="Goto S."/>
            <person name="Yabuzaki J."/>
            <person name="Kanehisa M."/>
            <person name="Yamashita A."/>
            <person name="Oshima K."/>
            <person name="Furuya K."/>
            <person name="Yoshino C."/>
            <person name="Shiba T."/>
            <person name="Hattori M."/>
            <person name="Ogasawara N."/>
            <person name="Hayashi H."/>
            <person name="Hiramatsu K."/>
        </authorList>
    </citation>
    <scope>NUCLEOTIDE SEQUENCE [LARGE SCALE GENOMIC DNA]</scope>
    <source>
        <strain>N315</strain>
    </source>
</reference>
<protein>
    <recommendedName>
        <fullName>Na(+)/H(+) antiporter subunit B1</fullName>
    </recommendedName>
    <alternativeName>
        <fullName>Mnh complex subunit B1</fullName>
    </alternativeName>
</protein>
<comment type="function">
    <text evidence="1">Mnh complex is a Na(+)/H(+) antiporter involved in Na(+) excretion.</text>
</comment>
<comment type="subunit">
    <text evidence="1">May form a heterooligomeric complex that consists of seven subunits: mnhA1, mnhB1, mnhC1, mnhD1, mnhE1, mnhF1 and mnhG1.</text>
</comment>
<comment type="subcellular location">
    <subcellularLocation>
        <location evidence="3">Cell membrane</location>
        <topology evidence="3">Multi-pass membrane protein</topology>
    </subcellularLocation>
</comment>
<comment type="similarity">
    <text evidence="3">Belongs to the CPA3 antiporters (TC 2.A.63) subunit B family.</text>
</comment>
<accession>P60677</accession>
<accession>Q9ZNG5</accession>
<name>MNHB1_STAAN</name>
<proteinExistence type="inferred from homology"/>
<sequence>MNRQQNDLILQFAAVIIFFMVMVFGFSLFLAGHYTPGGGFVGGLLFASSLVIITIAFDIETMRKIFPLDFKILIGIGLVFCIATPIASWFLGKNFFTHVTFDIPLFILEPVHMTTAVFFDFGVLCAVVGTVMTIIISIGENE</sequence>
<dbReference type="EMBL" id="BA000018">
    <property type="protein sequence ID" value="BAB42051.1"/>
    <property type="molecule type" value="Genomic_DNA"/>
</dbReference>
<dbReference type="PIR" id="H89861">
    <property type="entry name" value="H89861"/>
</dbReference>
<dbReference type="RefSeq" id="WP_001081626.1">
    <property type="nucleotide sequence ID" value="NC_002745.2"/>
</dbReference>
<dbReference type="SMR" id="P60677"/>
<dbReference type="EnsemblBacteria" id="BAB42051">
    <property type="protein sequence ID" value="BAB42051"/>
    <property type="gene ID" value="BAB42051"/>
</dbReference>
<dbReference type="GeneID" id="66839149"/>
<dbReference type="KEGG" id="sau:SA0812"/>
<dbReference type="HOGENOM" id="CLU_101659_1_1_9"/>
<dbReference type="GO" id="GO:0005886">
    <property type="term" value="C:plasma membrane"/>
    <property type="evidence" value="ECO:0007669"/>
    <property type="project" value="UniProtKB-SubCell"/>
</dbReference>
<dbReference type="GO" id="GO:0015297">
    <property type="term" value="F:antiporter activity"/>
    <property type="evidence" value="ECO:0007669"/>
    <property type="project" value="UniProtKB-KW"/>
</dbReference>
<dbReference type="GO" id="GO:0008324">
    <property type="term" value="F:monoatomic cation transmembrane transporter activity"/>
    <property type="evidence" value="ECO:0007669"/>
    <property type="project" value="InterPro"/>
</dbReference>
<dbReference type="GO" id="GO:1902600">
    <property type="term" value="P:proton transmembrane transport"/>
    <property type="evidence" value="ECO:0007669"/>
    <property type="project" value="UniProtKB-KW"/>
</dbReference>
<dbReference type="GO" id="GO:0006814">
    <property type="term" value="P:sodium ion transport"/>
    <property type="evidence" value="ECO:0007669"/>
    <property type="project" value="UniProtKB-KW"/>
</dbReference>
<dbReference type="InterPro" id="IPR050622">
    <property type="entry name" value="CPA3_antiporter_subunitB"/>
</dbReference>
<dbReference type="InterPro" id="IPR005281">
    <property type="entry name" value="CPA3_sub_B"/>
</dbReference>
<dbReference type="InterPro" id="IPR007182">
    <property type="entry name" value="MnhB"/>
</dbReference>
<dbReference type="NCBIfam" id="TIGR00943">
    <property type="entry name" value="2a6301s02"/>
    <property type="match status" value="1"/>
</dbReference>
<dbReference type="NCBIfam" id="NF009223">
    <property type="entry name" value="PRK12573.1"/>
    <property type="match status" value="1"/>
</dbReference>
<dbReference type="PANTHER" id="PTHR33932">
    <property type="entry name" value="NA(+)/H(+) ANTIPORTER SUBUNIT B"/>
    <property type="match status" value="1"/>
</dbReference>
<dbReference type="PANTHER" id="PTHR33932:SF4">
    <property type="entry name" value="NA(+)_H(+) ANTIPORTER SUBUNIT B"/>
    <property type="match status" value="1"/>
</dbReference>
<dbReference type="Pfam" id="PF04039">
    <property type="entry name" value="MnhB"/>
    <property type="match status" value="1"/>
</dbReference>
<organism>
    <name type="scientific">Staphylococcus aureus (strain N315)</name>
    <dbReference type="NCBI Taxonomy" id="158879"/>
    <lineage>
        <taxon>Bacteria</taxon>
        <taxon>Bacillati</taxon>
        <taxon>Bacillota</taxon>
        <taxon>Bacilli</taxon>
        <taxon>Bacillales</taxon>
        <taxon>Staphylococcaceae</taxon>
        <taxon>Staphylococcus</taxon>
    </lineage>
</organism>